<dbReference type="EMBL" id="U28375">
    <property type="protein sequence ID" value="AAA83043.1"/>
    <property type="status" value="ALT_INIT"/>
    <property type="molecule type" value="Genomic_DNA"/>
</dbReference>
<dbReference type="EMBL" id="U00096">
    <property type="protein sequence ID" value="AAC75900.3"/>
    <property type="molecule type" value="Genomic_DNA"/>
</dbReference>
<dbReference type="EMBL" id="AP009048">
    <property type="protein sequence ID" value="BAE76928.1"/>
    <property type="status" value="ALT_INIT"/>
    <property type="molecule type" value="Genomic_DNA"/>
</dbReference>
<dbReference type="PIR" id="B65240">
    <property type="entry name" value="B65240"/>
</dbReference>
<dbReference type="RefSeq" id="NP_417338.3">
    <property type="nucleotide sequence ID" value="NC_000913.3"/>
</dbReference>
<dbReference type="SMR" id="P0CF43"/>
<dbReference type="DIP" id="DIP-28108N"/>
<dbReference type="FunCoup" id="P0CF43">
    <property type="interactions" value="56"/>
</dbReference>
<dbReference type="jPOST" id="P0CF43"/>
<dbReference type="EnsemblBacteria" id="AAC75900">
    <property type="protein sequence ID" value="AAC75900"/>
    <property type="gene ID" value="b2861"/>
</dbReference>
<dbReference type="GeneID" id="947347"/>
<dbReference type="KEGG" id="ecj:JW2829"/>
<dbReference type="KEGG" id="eco:b0360"/>
<dbReference type="KEGG" id="eco:b1403"/>
<dbReference type="KEGG" id="eco:b1997"/>
<dbReference type="KEGG" id="eco:b2861"/>
<dbReference type="KEGG" id="eco:b3044"/>
<dbReference type="KEGG" id="eco:b4272"/>
<dbReference type="KEGG" id="ecoc:C3026_00670"/>
<dbReference type="KEGG" id="ecoc:C3026_03840"/>
<dbReference type="KEGG" id="ecoc:C3026_06235"/>
<dbReference type="KEGG" id="ecoc:C3026_08180"/>
<dbReference type="KEGG" id="ecoc:C3026_09100"/>
<dbReference type="KEGG" id="ecoc:C3026_11265"/>
<dbReference type="KEGG" id="ecoc:C3026_15305"/>
<dbReference type="KEGG" id="ecoc:C3026_15700"/>
<dbReference type="KEGG" id="ecoc:C3026_16625"/>
<dbReference type="KEGG" id="ecoc:C3026_20340"/>
<dbReference type="KEGG" id="ecoc:C3026_23040"/>
<dbReference type="KEGG" id="ecoc:C3026_24220"/>
<dbReference type="EchoBASE" id="EB4738"/>
<dbReference type="HOGENOM" id="CLU_027402_25_0_6"/>
<dbReference type="InParanoid" id="P0CF43"/>
<dbReference type="PhylomeDB" id="P0CF43"/>
<dbReference type="BioCyc" id="EcoCyc:MONOMER0-4252"/>
<dbReference type="PRO" id="PR:P0CF43"/>
<dbReference type="Proteomes" id="UP000000625">
    <property type="component" value="Chromosome"/>
</dbReference>
<dbReference type="GO" id="GO:0003677">
    <property type="term" value="F:DNA binding"/>
    <property type="evidence" value="ECO:0007669"/>
    <property type="project" value="UniProtKB-KW"/>
</dbReference>
<dbReference type="GO" id="GO:0004803">
    <property type="term" value="F:transposase activity"/>
    <property type="evidence" value="ECO:0007669"/>
    <property type="project" value="InterPro"/>
</dbReference>
<dbReference type="GO" id="GO:0006313">
    <property type="term" value="P:DNA transposition"/>
    <property type="evidence" value="ECO:0007669"/>
    <property type="project" value="InterPro"/>
</dbReference>
<dbReference type="Gene3D" id="1.10.10.10">
    <property type="entry name" value="Winged helix-like DNA-binding domain superfamily/Winged helix DNA-binding domain"/>
    <property type="match status" value="1"/>
</dbReference>
<dbReference type="InterPro" id="IPR009057">
    <property type="entry name" value="Homeodomain-like_sf"/>
</dbReference>
<dbReference type="InterPro" id="IPR002514">
    <property type="entry name" value="Transposase_8"/>
</dbReference>
<dbReference type="InterPro" id="IPR036388">
    <property type="entry name" value="WH-like_DNA-bd_sf"/>
</dbReference>
<dbReference type="NCBIfam" id="NF006928">
    <property type="entry name" value="PRK09413.1"/>
    <property type="match status" value="1"/>
</dbReference>
<dbReference type="PANTHER" id="PTHR37936">
    <property type="entry name" value="TRANSPOSASE INSC FOR INSERTION ELEMENT IS2A-RELATED"/>
    <property type="match status" value="1"/>
</dbReference>
<dbReference type="PANTHER" id="PTHR37936:SF3">
    <property type="entry name" value="TRANSPOSASE INSC FOR INSERTION ELEMENT IS2A-RELATED"/>
    <property type="match status" value="1"/>
</dbReference>
<dbReference type="Pfam" id="PF01527">
    <property type="entry name" value="HTH_Tnp_1"/>
    <property type="match status" value="1"/>
</dbReference>
<dbReference type="SUPFAM" id="SSF46689">
    <property type="entry name" value="Homeodomain-like"/>
    <property type="match status" value="1"/>
</dbReference>
<evidence type="ECO:0000305" key="1"/>
<keyword id="KW-0233">DNA recombination</keyword>
<keyword id="KW-0238">DNA-binding</keyword>
<keyword id="KW-1185">Reference proteome</keyword>
<keyword id="KW-0814">Transposable element</keyword>
<keyword id="KW-0815">Transposition</keyword>
<feature type="chain" id="PRO_0000393451" description="Transposase InsC for insertion element IS2H">
    <location>
        <begin position="1"/>
        <end position="121"/>
    </location>
</feature>
<comment type="function">
    <text>Involved in the transposition of the insertion sequence IS2.</text>
</comment>
<comment type="similarity">
    <text evidence="1">Belongs to the transposase 8 family.</text>
</comment>
<comment type="sequence caution" evidence="1">
    <conflict type="erroneous initiation">
        <sequence resource="EMBL-CDS" id="AAA83043"/>
    </conflict>
    <text>Extended N-terminus.</text>
</comment>
<comment type="sequence caution" evidence="1">
    <conflict type="erroneous initiation">
        <sequence resource="EMBL-CDS" id="BAE76928"/>
    </conflict>
    <text>Truncated N-terminus.</text>
</comment>
<sequence length="121" mass="13452">MIDVLGPEKRRRRTTQEKIAIVQQSFEPGMTVSLVARQHGVAASQLFLWRKQYQEGSLTAVAAGEQVVPASELAAAMKQIKELQRLLGKKTMENELLKEAVEYGRAKKWIAHAPLLPGDGE</sequence>
<organism>
    <name type="scientific">Escherichia coli (strain K12)</name>
    <dbReference type="NCBI Taxonomy" id="83333"/>
    <lineage>
        <taxon>Bacteria</taxon>
        <taxon>Pseudomonadati</taxon>
        <taxon>Pseudomonadota</taxon>
        <taxon>Gammaproteobacteria</taxon>
        <taxon>Enterobacterales</taxon>
        <taxon>Enterobacteriaceae</taxon>
        <taxon>Escherichia</taxon>
    </lineage>
</organism>
<reference key="1">
    <citation type="journal article" date="1997" name="Science">
        <title>The complete genome sequence of Escherichia coli K-12.</title>
        <authorList>
            <person name="Blattner F.R."/>
            <person name="Plunkett G. III"/>
            <person name="Bloch C.A."/>
            <person name="Perna N.T."/>
            <person name="Burland V."/>
            <person name="Riley M."/>
            <person name="Collado-Vides J."/>
            <person name="Glasner J.D."/>
            <person name="Rode C.K."/>
            <person name="Mayhew G.F."/>
            <person name="Gregor J."/>
            <person name="Davis N.W."/>
            <person name="Kirkpatrick H.A."/>
            <person name="Goeden M.A."/>
            <person name="Rose D.J."/>
            <person name="Mau B."/>
            <person name="Shao Y."/>
        </authorList>
    </citation>
    <scope>NUCLEOTIDE SEQUENCE [LARGE SCALE GENOMIC DNA]</scope>
    <source>
        <strain>K12 / MG1655 / ATCC 47076</strain>
    </source>
</reference>
<reference key="2">
    <citation type="journal article" date="2006" name="Mol. Syst. Biol.">
        <title>Highly accurate genome sequences of Escherichia coli K-12 strains MG1655 and W3110.</title>
        <authorList>
            <person name="Hayashi K."/>
            <person name="Morooka N."/>
            <person name="Yamamoto Y."/>
            <person name="Fujita K."/>
            <person name="Isono K."/>
            <person name="Choi S."/>
            <person name="Ohtsubo E."/>
            <person name="Baba T."/>
            <person name="Wanner B.L."/>
            <person name="Mori H."/>
            <person name="Horiuchi T."/>
        </authorList>
    </citation>
    <scope>NUCLEOTIDE SEQUENCE [LARGE SCALE GENOMIC DNA]</scope>
    <source>
        <strain>K12 / W3110 / ATCC 27325 / DSM 5911</strain>
    </source>
</reference>
<gene>
    <name type="primary">insC4</name>
    <name type="ordered locus">b2861</name>
    <name type="ordered locus">JW2829</name>
</gene>
<name>INSC4_ECOLI</name>
<proteinExistence type="inferred from homology"/>
<protein>
    <recommendedName>
        <fullName>Transposase InsC for insertion element IS2H</fullName>
    </recommendedName>
</protein>
<accession>P0CF43</accession>
<accession>O07989</accession>
<accession>O08018</accession>
<accession>O08019</accession>
<accession>P0C5W2</accession>
<accession>P19776</accession>
<accession>P76357</accession>
<accession>P77346</accession>
<accession>Q2MBI5</accession>
<accession>Q2MC65</accession>
<accession>Q79BJ2</accession>
<accession>Q9JMT0</accession>